<name>ARGB_PSEF5</name>
<accession>Q4K3S0</accession>
<organism>
    <name type="scientific">Pseudomonas fluorescens (strain ATCC BAA-477 / NRRL B-23932 / Pf-5)</name>
    <dbReference type="NCBI Taxonomy" id="220664"/>
    <lineage>
        <taxon>Bacteria</taxon>
        <taxon>Pseudomonadati</taxon>
        <taxon>Pseudomonadota</taxon>
        <taxon>Gammaproteobacteria</taxon>
        <taxon>Pseudomonadales</taxon>
        <taxon>Pseudomonadaceae</taxon>
        <taxon>Pseudomonas</taxon>
    </lineage>
</organism>
<gene>
    <name evidence="1" type="primary">argB</name>
    <name type="ordered locus">PFL_6055</name>
</gene>
<proteinExistence type="inferred from homology"/>
<sequence>MTIERDAAANTAKVLSEALPYIRRYVGKTLVIKYGGNAMESEELKTGFARDIVLMKAVGINPVVVHGGGPQIGDLLKRLSIESHFVDGMRVTDAQTMDVVEMVLGGQVNKDIVNLINRHGGSAIGLTGKDAELIRAKKLTVTRQTPEMTTPEIIDIGHVGEVVGINTDLLNLLVKGDFIPVIAPIGVGANGESYNINADLVAGKVAEALKAEKLMLLTNIAGLMDKSGKVLTGLSTQQVDELIADGTIYGGMLPKIRCALEAVQGGVGSSLIIDGRVPNAILLEIFTDTGVGTLISNRKRP</sequence>
<evidence type="ECO:0000255" key="1">
    <source>
        <dbReference type="HAMAP-Rule" id="MF_00082"/>
    </source>
</evidence>
<comment type="function">
    <text evidence="1">Catalyzes the ATP-dependent phosphorylation of N-acetyl-L-glutamate.</text>
</comment>
<comment type="catalytic activity">
    <reaction evidence="1">
        <text>N-acetyl-L-glutamate + ATP = N-acetyl-L-glutamyl 5-phosphate + ADP</text>
        <dbReference type="Rhea" id="RHEA:14629"/>
        <dbReference type="ChEBI" id="CHEBI:30616"/>
        <dbReference type="ChEBI" id="CHEBI:44337"/>
        <dbReference type="ChEBI" id="CHEBI:57936"/>
        <dbReference type="ChEBI" id="CHEBI:456216"/>
        <dbReference type="EC" id="2.7.2.8"/>
    </reaction>
</comment>
<comment type="pathway">
    <text evidence="1">Amino-acid biosynthesis; L-arginine biosynthesis; N(2)-acetyl-L-ornithine from L-glutamate: step 2/4.</text>
</comment>
<comment type="subcellular location">
    <subcellularLocation>
        <location evidence="1">Cytoplasm</location>
    </subcellularLocation>
</comment>
<comment type="similarity">
    <text evidence="1">Belongs to the acetylglutamate kinase family. ArgB subfamily.</text>
</comment>
<feature type="chain" id="PRO_0000264734" description="Acetylglutamate kinase">
    <location>
        <begin position="1"/>
        <end position="301"/>
    </location>
</feature>
<feature type="binding site" evidence="1">
    <location>
        <begin position="68"/>
        <end position="69"/>
    </location>
    <ligand>
        <name>substrate</name>
    </ligand>
</feature>
<feature type="binding site" evidence="1">
    <location>
        <position position="90"/>
    </location>
    <ligand>
        <name>substrate</name>
    </ligand>
</feature>
<feature type="binding site" evidence="1">
    <location>
        <position position="195"/>
    </location>
    <ligand>
        <name>substrate</name>
    </ligand>
</feature>
<feature type="site" description="Transition state stabilizer" evidence="1">
    <location>
        <position position="33"/>
    </location>
</feature>
<feature type="site" description="Transition state stabilizer" evidence="1">
    <location>
        <position position="255"/>
    </location>
</feature>
<dbReference type="EC" id="2.7.2.8" evidence="1"/>
<dbReference type="EMBL" id="CP000076">
    <property type="protein sequence ID" value="AAY95243.1"/>
    <property type="molecule type" value="Genomic_DNA"/>
</dbReference>
<dbReference type="RefSeq" id="WP_011064225.1">
    <property type="nucleotide sequence ID" value="NC_004129.6"/>
</dbReference>
<dbReference type="SMR" id="Q4K3S0"/>
<dbReference type="STRING" id="220664.PFL_6055"/>
<dbReference type="GeneID" id="57479014"/>
<dbReference type="KEGG" id="pfl:PFL_6055"/>
<dbReference type="eggNOG" id="COG0548">
    <property type="taxonomic scope" value="Bacteria"/>
</dbReference>
<dbReference type="HOGENOM" id="CLU_053680_0_0_6"/>
<dbReference type="UniPathway" id="UPA00068">
    <property type="reaction ID" value="UER00107"/>
</dbReference>
<dbReference type="Proteomes" id="UP000008540">
    <property type="component" value="Chromosome"/>
</dbReference>
<dbReference type="GO" id="GO:0005737">
    <property type="term" value="C:cytoplasm"/>
    <property type="evidence" value="ECO:0007669"/>
    <property type="project" value="UniProtKB-SubCell"/>
</dbReference>
<dbReference type="GO" id="GO:0003991">
    <property type="term" value="F:acetylglutamate kinase activity"/>
    <property type="evidence" value="ECO:0007669"/>
    <property type="project" value="UniProtKB-UniRule"/>
</dbReference>
<dbReference type="GO" id="GO:0005524">
    <property type="term" value="F:ATP binding"/>
    <property type="evidence" value="ECO:0007669"/>
    <property type="project" value="UniProtKB-UniRule"/>
</dbReference>
<dbReference type="GO" id="GO:0042450">
    <property type="term" value="P:arginine biosynthetic process via ornithine"/>
    <property type="evidence" value="ECO:0007669"/>
    <property type="project" value="UniProtKB-UniRule"/>
</dbReference>
<dbReference type="GO" id="GO:0006526">
    <property type="term" value="P:L-arginine biosynthetic process"/>
    <property type="evidence" value="ECO:0007669"/>
    <property type="project" value="UniProtKB-UniPathway"/>
</dbReference>
<dbReference type="CDD" id="cd04250">
    <property type="entry name" value="AAK_NAGK-C"/>
    <property type="match status" value="1"/>
</dbReference>
<dbReference type="FunFam" id="3.40.1160.10:FF:000004">
    <property type="entry name" value="Acetylglutamate kinase"/>
    <property type="match status" value="1"/>
</dbReference>
<dbReference type="Gene3D" id="3.40.1160.10">
    <property type="entry name" value="Acetylglutamate kinase-like"/>
    <property type="match status" value="1"/>
</dbReference>
<dbReference type="HAMAP" id="MF_00082">
    <property type="entry name" value="ArgB"/>
    <property type="match status" value="1"/>
</dbReference>
<dbReference type="InterPro" id="IPR036393">
    <property type="entry name" value="AceGlu_kinase-like_sf"/>
</dbReference>
<dbReference type="InterPro" id="IPR004662">
    <property type="entry name" value="AcgluKinase_fam"/>
</dbReference>
<dbReference type="InterPro" id="IPR037528">
    <property type="entry name" value="ArgB"/>
</dbReference>
<dbReference type="InterPro" id="IPR001048">
    <property type="entry name" value="Asp/Glu/Uridylate_kinase"/>
</dbReference>
<dbReference type="InterPro" id="IPR001057">
    <property type="entry name" value="Glu/AcGlu_kinase"/>
</dbReference>
<dbReference type="InterPro" id="IPR041727">
    <property type="entry name" value="NAGK-C"/>
</dbReference>
<dbReference type="NCBIfam" id="TIGR00761">
    <property type="entry name" value="argB"/>
    <property type="match status" value="1"/>
</dbReference>
<dbReference type="PANTHER" id="PTHR23342">
    <property type="entry name" value="N-ACETYLGLUTAMATE SYNTHASE"/>
    <property type="match status" value="1"/>
</dbReference>
<dbReference type="PANTHER" id="PTHR23342:SF0">
    <property type="entry name" value="N-ACETYLGLUTAMATE SYNTHASE, MITOCHONDRIAL"/>
    <property type="match status" value="1"/>
</dbReference>
<dbReference type="Pfam" id="PF00696">
    <property type="entry name" value="AA_kinase"/>
    <property type="match status" value="1"/>
</dbReference>
<dbReference type="PIRSF" id="PIRSF000728">
    <property type="entry name" value="NAGK"/>
    <property type="match status" value="1"/>
</dbReference>
<dbReference type="PRINTS" id="PR00474">
    <property type="entry name" value="GLU5KINASE"/>
</dbReference>
<dbReference type="SUPFAM" id="SSF53633">
    <property type="entry name" value="Carbamate kinase-like"/>
    <property type="match status" value="1"/>
</dbReference>
<reference key="1">
    <citation type="journal article" date="2005" name="Nat. Biotechnol.">
        <title>Complete genome sequence of the plant commensal Pseudomonas fluorescens Pf-5.</title>
        <authorList>
            <person name="Paulsen I.T."/>
            <person name="Press C.M."/>
            <person name="Ravel J."/>
            <person name="Kobayashi D.Y."/>
            <person name="Myers G.S.A."/>
            <person name="Mavrodi D.V."/>
            <person name="DeBoy R.T."/>
            <person name="Seshadri R."/>
            <person name="Ren Q."/>
            <person name="Madupu R."/>
            <person name="Dodson R.J."/>
            <person name="Durkin A.S."/>
            <person name="Brinkac L.M."/>
            <person name="Daugherty S.C."/>
            <person name="Sullivan S.A."/>
            <person name="Rosovitz M.J."/>
            <person name="Gwinn M.L."/>
            <person name="Zhou L."/>
            <person name="Schneider D.J."/>
            <person name="Cartinhour S.W."/>
            <person name="Nelson W.C."/>
            <person name="Weidman J."/>
            <person name="Watkins K."/>
            <person name="Tran K."/>
            <person name="Khouri H."/>
            <person name="Pierson E.A."/>
            <person name="Pierson L.S. III"/>
            <person name="Thomashow L.S."/>
            <person name="Loper J.E."/>
        </authorList>
    </citation>
    <scope>NUCLEOTIDE SEQUENCE [LARGE SCALE GENOMIC DNA]</scope>
    <source>
        <strain>ATCC BAA-477 / NRRL B-23932 / Pf-5</strain>
    </source>
</reference>
<keyword id="KW-0028">Amino-acid biosynthesis</keyword>
<keyword id="KW-0055">Arginine biosynthesis</keyword>
<keyword id="KW-0067">ATP-binding</keyword>
<keyword id="KW-0963">Cytoplasm</keyword>
<keyword id="KW-0418">Kinase</keyword>
<keyword id="KW-0547">Nucleotide-binding</keyword>
<keyword id="KW-0808">Transferase</keyword>
<protein>
    <recommendedName>
        <fullName evidence="1">Acetylglutamate kinase</fullName>
        <ecNumber evidence="1">2.7.2.8</ecNumber>
    </recommendedName>
    <alternativeName>
        <fullName evidence="1">N-acetyl-L-glutamate 5-phosphotransferase</fullName>
    </alternativeName>
    <alternativeName>
        <fullName evidence="1">NAG kinase</fullName>
        <shortName evidence="1">NAGK</shortName>
    </alternativeName>
</protein>